<name>RL18_BRUA2</name>
<accession>Q2YRT2</accession>
<comment type="function">
    <text evidence="1">This is one of the proteins that bind and probably mediate the attachment of the 5S RNA into the large ribosomal subunit, where it forms part of the central protuberance.</text>
</comment>
<comment type="subunit">
    <text evidence="1">Part of the 50S ribosomal subunit; part of the 5S rRNA/L5/L18/L25 subcomplex. Contacts the 5S and 23S rRNAs.</text>
</comment>
<comment type="similarity">
    <text evidence="1">Belongs to the universal ribosomal protein uL18 family.</text>
</comment>
<sequence length="120" mass="12669">MASPKETLQRRAARVRRQVKAVANGRPRLSVHRSSKNIYAQIIDDVRGVTLAAASTLDGDLKGKLKTGADSAAAAAVGKLVAERAVKAGVKDVVFDRGAFIYHGRVKALAEAAREGGLSF</sequence>
<dbReference type="EMBL" id="AM040264">
    <property type="protein sequence ID" value="CAJ11195.1"/>
    <property type="molecule type" value="Genomic_DNA"/>
</dbReference>
<dbReference type="RefSeq" id="WP_002964346.1">
    <property type="nucleotide sequence ID" value="NZ_KN046823.1"/>
</dbReference>
<dbReference type="SMR" id="Q2YRT2"/>
<dbReference type="STRING" id="359391.BAB1_1239"/>
<dbReference type="GeneID" id="97533540"/>
<dbReference type="KEGG" id="bmf:BAB1_1239"/>
<dbReference type="PATRIC" id="fig|359391.11.peg.139"/>
<dbReference type="HOGENOM" id="CLU_098841_0_1_5"/>
<dbReference type="PhylomeDB" id="Q2YRT2"/>
<dbReference type="Proteomes" id="UP000002719">
    <property type="component" value="Chromosome I"/>
</dbReference>
<dbReference type="GO" id="GO:0022625">
    <property type="term" value="C:cytosolic large ribosomal subunit"/>
    <property type="evidence" value="ECO:0007669"/>
    <property type="project" value="TreeGrafter"/>
</dbReference>
<dbReference type="GO" id="GO:0008097">
    <property type="term" value="F:5S rRNA binding"/>
    <property type="evidence" value="ECO:0007669"/>
    <property type="project" value="TreeGrafter"/>
</dbReference>
<dbReference type="GO" id="GO:0003735">
    <property type="term" value="F:structural constituent of ribosome"/>
    <property type="evidence" value="ECO:0007669"/>
    <property type="project" value="InterPro"/>
</dbReference>
<dbReference type="GO" id="GO:0006412">
    <property type="term" value="P:translation"/>
    <property type="evidence" value="ECO:0007669"/>
    <property type="project" value="UniProtKB-UniRule"/>
</dbReference>
<dbReference type="CDD" id="cd00432">
    <property type="entry name" value="Ribosomal_L18_L5e"/>
    <property type="match status" value="1"/>
</dbReference>
<dbReference type="FunFam" id="3.30.420.100:FF:000001">
    <property type="entry name" value="50S ribosomal protein L18"/>
    <property type="match status" value="1"/>
</dbReference>
<dbReference type="Gene3D" id="3.30.420.100">
    <property type="match status" value="1"/>
</dbReference>
<dbReference type="HAMAP" id="MF_01337_B">
    <property type="entry name" value="Ribosomal_uL18_B"/>
    <property type="match status" value="1"/>
</dbReference>
<dbReference type="InterPro" id="IPR004389">
    <property type="entry name" value="Ribosomal_uL18_bac-type"/>
</dbReference>
<dbReference type="InterPro" id="IPR005484">
    <property type="entry name" value="Ribosomal_uL18_bac/euk"/>
</dbReference>
<dbReference type="NCBIfam" id="TIGR00060">
    <property type="entry name" value="L18_bact"/>
    <property type="match status" value="1"/>
</dbReference>
<dbReference type="PANTHER" id="PTHR12899">
    <property type="entry name" value="39S RIBOSOMAL PROTEIN L18, MITOCHONDRIAL"/>
    <property type="match status" value="1"/>
</dbReference>
<dbReference type="PANTHER" id="PTHR12899:SF3">
    <property type="entry name" value="LARGE RIBOSOMAL SUBUNIT PROTEIN UL18M"/>
    <property type="match status" value="1"/>
</dbReference>
<dbReference type="Pfam" id="PF00861">
    <property type="entry name" value="Ribosomal_L18p"/>
    <property type="match status" value="1"/>
</dbReference>
<dbReference type="SUPFAM" id="SSF53137">
    <property type="entry name" value="Translational machinery components"/>
    <property type="match status" value="1"/>
</dbReference>
<keyword id="KW-1185">Reference proteome</keyword>
<keyword id="KW-0687">Ribonucleoprotein</keyword>
<keyword id="KW-0689">Ribosomal protein</keyword>
<keyword id="KW-0694">RNA-binding</keyword>
<keyword id="KW-0699">rRNA-binding</keyword>
<feature type="chain" id="PRO_0000251291" description="Large ribosomal subunit protein uL18">
    <location>
        <begin position="1"/>
        <end position="120"/>
    </location>
</feature>
<proteinExistence type="inferred from homology"/>
<reference key="1">
    <citation type="journal article" date="2005" name="Infect. Immun.">
        <title>Whole-genome analyses of speciation events in pathogenic Brucellae.</title>
        <authorList>
            <person name="Chain P.S."/>
            <person name="Comerci D.J."/>
            <person name="Tolmasky M.E."/>
            <person name="Larimer F.W."/>
            <person name="Malfatti S.A."/>
            <person name="Vergez L.M."/>
            <person name="Aguero F."/>
            <person name="Land M.L."/>
            <person name="Ugalde R.A."/>
            <person name="Garcia E."/>
        </authorList>
    </citation>
    <scope>NUCLEOTIDE SEQUENCE [LARGE SCALE GENOMIC DNA]</scope>
    <source>
        <strain>2308</strain>
    </source>
</reference>
<evidence type="ECO:0000255" key="1">
    <source>
        <dbReference type="HAMAP-Rule" id="MF_01337"/>
    </source>
</evidence>
<evidence type="ECO:0000305" key="2"/>
<gene>
    <name evidence="1" type="primary">rplR</name>
    <name type="ordered locus">BAB1_1239</name>
</gene>
<protein>
    <recommendedName>
        <fullName evidence="1">Large ribosomal subunit protein uL18</fullName>
    </recommendedName>
    <alternativeName>
        <fullName evidence="2">50S ribosomal protein L18</fullName>
    </alternativeName>
</protein>
<organism>
    <name type="scientific">Brucella abortus (strain 2308)</name>
    <dbReference type="NCBI Taxonomy" id="359391"/>
    <lineage>
        <taxon>Bacteria</taxon>
        <taxon>Pseudomonadati</taxon>
        <taxon>Pseudomonadota</taxon>
        <taxon>Alphaproteobacteria</taxon>
        <taxon>Hyphomicrobiales</taxon>
        <taxon>Brucellaceae</taxon>
        <taxon>Brucella/Ochrobactrum group</taxon>
        <taxon>Brucella</taxon>
    </lineage>
</organism>